<proteinExistence type="inferred from homology"/>
<keyword id="KW-0158">Chromosome</keyword>
<keyword id="KW-0238">DNA-binding</keyword>
<keyword id="KW-0544">Nucleosome core</keyword>
<keyword id="KW-0539">Nucleus</keyword>
<keyword id="KW-1185">Reference proteome</keyword>
<organism>
    <name type="scientific">Dictyostelium discoideum</name>
    <name type="common">Social amoeba</name>
    <dbReference type="NCBI Taxonomy" id="44689"/>
    <lineage>
        <taxon>Eukaryota</taxon>
        <taxon>Amoebozoa</taxon>
        <taxon>Evosea</taxon>
        <taxon>Eumycetozoa</taxon>
        <taxon>Dictyostelia</taxon>
        <taxon>Dictyosteliales</taxon>
        <taxon>Dictyosteliaceae</taxon>
        <taxon>Dictyostelium</taxon>
    </lineage>
</organism>
<comment type="function">
    <text evidence="1">Core component of nucleosome which plays a central role in DNA double strand break (DSB) repair. Nucleosomes wrap and compact DNA into chromatin, limiting DNA accessibility to the cellular machineries which require DNA as a template. Histones thereby play a central role in transcription regulation, DNA repair, DNA replication and chromosomal stability. DNA accessibility is regulated via a complex set of post-translational modifications of histones, also called histone code, and nucleosome remodeling (By similarity).</text>
</comment>
<comment type="subunit">
    <text evidence="1">The nucleosome is a histone octamer containing two molecules each of H2A, H2B, H3 and H4 assembled in one H3-H4 heterotetramer and two H2A-H2B heterodimers. The octamer wraps approximately 147 bp of DNA (By similarity).</text>
</comment>
<comment type="subcellular location">
    <subcellularLocation>
        <location evidence="1">Nucleus</location>
    </subcellularLocation>
    <subcellularLocation>
        <location evidence="1">Chromosome</location>
    </subcellularLocation>
</comment>
<comment type="similarity">
    <text evidence="3">Belongs to the histone H2B family.</text>
</comment>
<name>H2BV3_DICDI</name>
<gene>
    <name type="primary">H2Bv3</name>
    <name type="ORF">DDB_G0286509</name>
</gene>
<protein>
    <recommendedName>
        <fullName>Histone H2B.v3</fullName>
    </recommendedName>
</protein>
<dbReference type="EMBL" id="AAFI02000087">
    <property type="protein sequence ID" value="EAL64181.1"/>
    <property type="molecule type" value="Genomic_DNA"/>
</dbReference>
<dbReference type="RefSeq" id="XP_637684.1">
    <property type="nucleotide sequence ID" value="XM_632592.1"/>
</dbReference>
<dbReference type="SMR" id="Q54LP8"/>
<dbReference type="FunCoup" id="Q54LP8">
    <property type="interactions" value="250"/>
</dbReference>
<dbReference type="STRING" id="44689.Q54LP8"/>
<dbReference type="PaxDb" id="44689-DDB0231622"/>
<dbReference type="EnsemblProtists" id="EAL64181">
    <property type="protein sequence ID" value="EAL64181"/>
    <property type="gene ID" value="DDB_G0286509"/>
</dbReference>
<dbReference type="GeneID" id="8625650"/>
<dbReference type="KEGG" id="ddi:DDB_G0286509"/>
<dbReference type="dictyBase" id="DDB_G0286509">
    <property type="gene designation" value="H2Bv3"/>
</dbReference>
<dbReference type="VEuPathDB" id="AmoebaDB:DDB_G0286509"/>
<dbReference type="eggNOG" id="KOG1744">
    <property type="taxonomic scope" value="Eukaryota"/>
</dbReference>
<dbReference type="HOGENOM" id="CLU_075666_1_3_1"/>
<dbReference type="InParanoid" id="Q54LP8"/>
<dbReference type="OMA" id="SEVEYMG"/>
<dbReference type="PhylomeDB" id="Q54LP8"/>
<dbReference type="Reactome" id="R-DDI-2299718">
    <property type="pathway name" value="Condensation of Prophase Chromosomes"/>
</dbReference>
<dbReference type="Reactome" id="R-DDI-2559580">
    <property type="pathway name" value="Oxidative Stress Induced Senescence"/>
</dbReference>
<dbReference type="Reactome" id="R-DDI-3214815">
    <property type="pathway name" value="HDACs deacetylate histones"/>
</dbReference>
<dbReference type="Reactome" id="R-DDI-427359">
    <property type="pathway name" value="SIRT1 negatively regulates rRNA expression"/>
</dbReference>
<dbReference type="Reactome" id="R-DDI-5625886">
    <property type="pathway name" value="Activated PKN1 stimulates transcription of AR (androgen receptor) regulated genes KLK2 and KLK3"/>
</dbReference>
<dbReference type="Reactome" id="R-DDI-5689880">
    <property type="pathway name" value="Ub-specific processing proteases"/>
</dbReference>
<dbReference type="Reactome" id="R-DDI-5693565">
    <property type="pathway name" value="Recruitment and ATM-mediated phosphorylation of repair and signaling proteins at DNA double strand breaks"/>
</dbReference>
<dbReference type="Reactome" id="R-DDI-68616">
    <property type="pathway name" value="Assembly of the ORC complex at the origin of replication"/>
</dbReference>
<dbReference type="Reactome" id="R-DDI-73772">
    <property type="pathway name" value="RNA Polymerase I Promoter Escape"/>
</dbReference>
<dbReference type="Reactome" id="R-DDI-9843940">
    <property type="pathway name" value="Regulation of endogenous retroelements by KRAB-ZFP proteins"/>
</dbReference>
<dbReference type="PRO" id="PR:Q54LP8"/>
<dbReference type="Proteomes" id="UP000002195">
    <property type="component" value="Chromosome 4"/>
</dbReference>
<dbReference type="GO" id="GO:0031012">
    <property type="term" value="C:extracellular matrix"/>
    <property type="evidence" value="ECO:0007005"/>
    <property type="project" value="dictyBase"/>
</dbReference>
<dbReference type="GO" id="GO:0000786">
    <property type="term" value="C:nucleosome"/>
    <property type="evidence" value="ECO:0007669"/>
    <property type="project" value="UniProtKB-KW"/>
</dbReference>
<dbReference type="GO" id="GO:0005634">
    <property type="term" value="C:nucleus"/>
    <property type="evidence" value="ECO:0000314"/>
    <property type="project" value="dictyBase"/>
</dbReference>
<dbReference type="GO" id="GO:0003677">
    <property type="term" value="F:DNA binding"/>
    <property type="evidence" value="ECO:0007669"/>
    <property type="project" value="UniProtKB-KW"/>
</dbReference>
<dbReference type="GO" id="GO:0046982">
    <property type="term" value="F:protein heterodimerization activity"/>
    <property type="evidence" value="ECO:0007669"/>
    <property type="project" value="InterPro"/>
</dbReference>
<dbReference type="GO" id="GO:0030527">
    <property type="term" value="F:structural constituent of chromatin"/>
    <property type="evidence" value="ECO:0007669"/>
    <property type="project" value="InterPro"/>
</dbReference>
<dbReference type="GO" id="GO:0046689">
    <property type="term" value="P:response to mercury ion"/>
    <property type="evidence" value="ECO:0000314"/>
    <property type="project" value="dictyBase"/>
</dbReference>
<dbReference type="CDD" id="cd22910">
    <property type="entry name" value="HFD_H2B"/>
    <property type="match status" value="1"/>
</dbReference>
<dbReference type="FunFam" id="1.10.20.10:FF:000043">
    <property type="entry name" value="Histone H2B"/>
    <property type="match status" value="1"/>
</dbReference>
<dbReference type="Gene3D" id="1.10.20.10">
    <property type="entry name" value="Histone, subunit A"/>
    <property type="match status" value="1"/>
</dbReference>
<dbReference type="InterPro" id="IPR009072">
    <property type="entry name" value="Histone-fold"/>
</dbReference>
<dbReference type="InterPro" id="IPR007125">
    <property type="entry name" value="Histone_H2A/H2B/H3"/>
</dbReference>
<dbReference type="InterPro" id="IPR000558">
    <property type="entry name" value="Histone_H2B"/>
</dbReference>
<dbReference type="PANTHER" id="PTHR23428">
    <property type="entry name" value="HISTONE H2B"/>
    <property type="match status" value="1"/>
</dbReference>
<dbReference type="Pfam" id="PF00125">
    <property type="entry name" value="Histone"/>
    <property type="match status" value="1"/>
</dbReference>
<dbReference type="SMART" id="SM00427">
    <property type="entry name" value="H2B"/>
    <property type="match status" value="1"/>
</dbReference>
<dbReference type="SUPFAM" id="SSF47113">
    <property type="entry name" value="Histone-fold"/>
    <property type="match status" value="1"/>
</dbReference>
<reference key="1">
    <citation type="journal article" date="2005" name="Nature">
        <title>The genome of the social amoeba Dictyostelium discoideum.</title>
        <authorList>
            <person name="Eichinger L."/>
            <person name="Pachebat J.A."/>
            <person name="Gloeckner G."/>
            <person name="Rajandream M.A."/>
            <person name="Sucgang R."/>
            <person name="Berriman M."/>
            <person name="Song J."/>
            <person name="Olsen R."/>
            <person name="Szafranski K."/>
            <person name="Xu Q."/>
            <person name="Tunggal B."/>
            <person name="Kummerfeld S."/>
            <person name="Madera M."/>
            <person name="Konfortov B.A."/>
            <person name="Rivero F."/>
            <person name="Bankier A.T."/>
            <person name="Lehmann R."/>
            <person name="Hamlin N."/>
            <person name="Davies R."/>
            <person name="Gaudet P."/>
            <person name="Fey P."/>
            <person name="Pilcher K."/>
            <person name="Chen G."/>
            <person name="Saunders D."/>
            <person name="Sodergren E.J."/>
            <person name="Davis P."/>
            <person name="Kerhornou A."/>
            <person name="Nie X."/>
            <person name="Hall N."/>
            <person name="Anjard C."/>
            <person name="Hemphill L."/>
            <person name="Bason N."/>
            <person name="Farbrother P."/>
            <person name="Desany B."/>
            <person name="Just E."/>
            <person name="Morio T."/>
            <person name="Rost R."/>
            <person name="Churcher C.M."/>
            <person name="Cooper J."/>
            <person name="Haydock S."/>
            <person name="van Driessche N."/>
            <person name="Cronin A."/>
            <person name="Goodhead I."/>
            <person name="Muzny D.M."/>
            <person name="Mourier T."/>
            <person name="Pain A."/>
            <person name="Lu M."/>
            <person name="Harper D."/>
            <person name="Lindsay R."/>
            <person name="Hauser H."/>
            <person name="James K.D."/>
            <person name="Quiles M."/>
            <person name="Madan Babu M."/>
            <person name="Saito T."/>
            <person name="Buchrieser C."/>
            <person name="Wardroper A."/>
            <person name="Felder M."/>
            <person name="Thangavelu M."/>
            <person name="Johnson D."/>
            <person name="Knights A."/>
            <person name="Loulseged H."/>
            <person name="Mungall K.L."/>
            <person name="Oliver K."/>
            <person name="Price C."/>
            <person name="Quail M.A."/>
            <person name="Urushihara H."/>
            <person name="Hernandez J."/>
            <person name="Rabbinowitsch E."/>
            <person name="Steffen D."/>
            <person name="Sanders M."/>
            <person name="Ma J."/>
            <person name="Kohara Y."/>
            <person name="Sharp S."/>
            <person name="Simmonds M.N."/>
            <person name="Spiegler S."/>
            <person name="Tivey A."/>
            <person name="Sugano S."/>
            <person name="White B."/>
            <person name="Walker D."/>
            <person name="Woodward J.R."/>
            <person name="Winckler T."/>
            <person name="Tanaka Y."/>
            <person name="Shaulsky G."/>
            <person name="Schleicher M."/>
            <person name="Weinstock G.M."/>
            <person name="Rosenthal A."/>
            <person name="Cox E.C."/>
            <person name="Chisholm R.L."/>
            <person name="Gibbs R.A."/>
            <person name="Loomis W.F."/>
            <person name="Platzer M."/>
            <person name="Kay R.R."/>
            <person name="Williams J.G."/>
            <person name="Dear P.H."/>
            <person name="Noegel A.A."/>
            <person name="Barrell B.G."/>
            <person name="Kuspa A."/>
        </authorList>
    </citation>
    <scope>NUCLEOTIDE SEQUENCE [LARGE SCALE GENOMIC DNA]</scope>
    <source>
        <strain>AX4</strain>
    </source>
</reference>
<sequence length="154" mass="17100">MVFVKGQKKATKGSTQSGEEKTASTTPKVTKTPTEGGEKKRKKRKSDYTSFSTYIHKLLKQITPPTNAKSNEKGDRKFTISSKAMSVMNSFVHDIFDRIATEASGLAKKKKRQTLHSRDIQVAVRIILTGELAKHAILQGMTAVNKYNPTESKN</sequence>
<accession>Q54LP8</accession>
<feature type="chain" id="PRO_0000389160" description="Histone H2B.v3">
    <location>
        <begin position="1"/>
        <end position="154"/>
    </location>
</feature>
<feature type="region of interest" description="Disordered" evidence="2">
    <location>
        <begin position="1"/>
        <end position="48"/>
    </location>
</feature>
<feature type="compositionally biased region" description="Basic residues" evidence="2">
    <location>
        <begin position="1"/>
        <end position="11"/>
    </location>
</feature>
<feature type="compositionally biased region" description="Polar residues" evidence="2">
    <location>
        <begin position="12"/>
        <end position="27"/>
    </location>
</feature>
<evidence type="ECO:0000250" key="1"/>
<evidence type="ECO:0000256" key="2">
    <source>
        <dbReference type="SAM" id="MobiDB-lite"/>
    </source>
</evidence>
<evidence type="ECO:0000305" key="3"/>